<keyword id="KW-0072">Autophagy</keyword>
<keyword id="KW-0967">Endosome</keyword>
<keyword id="KW-0446">Lipid-binding</keyword>
<keyword id="KW-0472">Membrane</keyword>
<keyword id="KW-0653">Protein transport</keyword>
<keyword id="KW-1185">Reference proteome</keyword>
<keyword id="KW-0813">Transport</keyword>
<evidence type="ECO:0000250" key="1"/>
<evidence type="ECO:0000255" key="2">
    <source>
        <dbReference type="PROSITE-ProRule" id="PRU00147"/>
    </source>
</evidence>
<evidence type="ECO:0000256" key="3">
    <source>
        <dbReference type="SAM" id="MobiDB-lite"/>
    </source>
</evidence>
<evidence type="ECO:0000305" key="4"/>
<comment type="function">
    <text evidence="1">May be required for cytoplasm to vacuole transport (Cvt) and pexophagy.</text>
</comment>
<comment type="subcellular location">
    <subcellularLocation>
        <location evidence="1">Endosome membrane</location>
        <topology evidence="1">Peripheral membrane protein</topology>
    </subcellularLocation>
    <subcellularLocation>
        <location evidence="1">Endomembrane system</location>
        <topology evidence="1">Peripheral membrane protein</topology>
    </subcellularLocation>
    <text evidence="1">Endosome and other perivacuolar punctate structures.</text>
</comment>
<comment type="domain">
    <text evidence="1">The PX domain binds phosphatidylinositol 3-phosphate which is necessary for peripheral membrane localization to the perivacuolar punctate structures.</text>
</comment>
<comment type="similarity">
    <text evidence="4">Belongs to the sorting nexin family.</text>
</comment>
<proteinExistence type="inferred from homology"/>
<protein>
    <recommendedName>
        <fullName>Sorting nexin-41</fullName>
    </recommendedName>
</protein>
<accession>Q759T1</accession>
<dbReference type="EMBL" id="AE016817">
    <property type="protein sequence ID" value="AAS52112.1"/>
    <property type="molecule type" value="Genomic_DNA"/>
</dbReference>
<dbReference type="RefSeq" id="NP_984288.1">
    <property type="nucleotide sequence ID" value="NM_209641.1"/>
</dbReference>
<dbReference type="FunCoup" id="Q759T1">
    <property type="interactions" value="116"/>
</dbReference>
<dbReference type="STRING" id="284811.Q759T1"/>
<dbReference type="EnsemblFungi" id="AAS52112">
    <property type="protein sequence ID" value="AAS52112"/>
    <property type="gene ID" value="AGOS_ADR192C"/>
</dbReference>
<dbReference type="GeneID" id="4620450"/>
<dbReference type="KEGG" id="ago:AGOS_ADR192C"/>
<dbReference type="eggNOG" id="KOG2273">
    <property type="taxonomic scope" value="Eukaryota"/>
</dbReference>
<dbReference type="HOGENOM" id="CLU_014456_3_0_1"/>
<dbReference type="InParanoid" id="Q759T1"/>
<dbReference type="OMA" id="DFKDPWG"/>
<dbReference type="OrthoDB" id="289314at2759"/>
<dbReference type="Proteomes" id="UP000000591">
    <property type="component" value="Chromosome IV"/>
</dbReference>
<dbReference type="GO" id="GO:0010009">
    <property type="term" value="C:cytoplasmic side of endosome membrane"/>
    <property type="evidence" value="ECO:0007669"/>
    <property type="project" value="EnsemblFungi"/>
</dbReference>
<dbReference type="GO" id="GO:0005829">
    <property type="term" value="C:cytosol"/>
    <property type="evidence" value="ECO:0007669"/>
    <property type="project" value="GOC"/>
</dbReference>
<dbReference type="GO" id="GO:0000407">
    <property type="term" value="C:phagophore assembly site"/>
    <property type="evidence" value="ECO:0000318"/>
    <property type="project" value="GO_Central"/>
</dbReference>
<dbReference type="GO" id="GO:0032266">
    <property type="term" value="F:phosphatidylinositol-3-phosphate binding"/>
    <property type="evidence" value="ECO:0000318"/>
    <property type="project" value="GO_Central"/>
</dbReference>
<dbReference type="GO" id="GO:0000422">
    <property type="term" value="P:autophagy of mitochondrion"/>
    <property type="evidence" value="ECO:0000318"/>
    <property type="project" value="GO_Central"/>
</dbReference>
<dbReference type="GO" id="GO:0006886">
    <property type="term" value="P:intracellular protein transport"/>
    <property type="evidence" value="ECO:0007669"/>
    <property type="project" value="EnsemblFungi"/>
</dbReference>
<dbReference type="GO" id="GO:0061709">
    <property type="term" value="P:reticulophagy"/>
    <property type="evidence" value="ECO:0000318"/>
    <property type="project" value="GO_Central"/>
</dbReference>
<dbReference type="GO" id="GO:0042147">
    <property type="term" value="P:retrograde transport, endosome to Golgi"/>
    <property type="evidence" value="ECO:0007669"/>
    <property type="project" value="EnsemblFungi"/>
</dbReference>
<dbReference type="CDD" id="cd06867">
    <property type="entry name" value="PX_SNX41_42"/>
    <property type="match status" value="1"/>
</dbReference>
<dbReference type="Gene3D" id="1.20.1270.60">
    <property type="entry name" value="Arfaptin homology (AH) domain/BAR domain"/>
    <property type="match status" value="1"/>
</dbReference>
<dbReference type="Gene3D" id="3.30.1520.10">
    <property type="entry name" value="Phox-like domain"/>
    <property type="match status" value="1"/>
</dbReference>
<dbReference type="InterPro" id="IPR027267">
    <property type="entry name" value="AH/BAR_dom_sf"/>
</dbReference>
<dbReference type="InterPro" id="IPR001683">
    <property type="entry name" value="PX_dom"/>
</dbReference>
<dbReference type="InterPro" id="IPR036871">
    <property type="entry name" value="PX_dom_sf"/>
</dbReference>
<dbReference type="InterPro" id="IPR044106">
    <property type="entry name" value="PX_Snx41/Atg20"/>
</dbReference>
<dbReference type="InterPro" id="IPR051079">
    <property type="entry name" value="Sorting_Nexin_Autophagy"/>
</dbReference>
<dbReference type="PANTHER" id="PTHR46979">
    <property type="entry name" value="SORTING NEXIN-41"/>
    <property type="match status" value="1"/>
</dbReference>
<dbReference type="PANTHER" id="PTHR46979:SF2">
    <property type="entry name" value="SORTING NEXIN-41"/>
    <property type="match status" value="1"/>
</dbReference>
<dbReference type="Pfam" id="PF00787">
    <property type="entry name" value="PX"/>
    <property type="match status" value="1"/>
</dbReference>
<dbReference type="SMART" id="SM00312">
    <property type="entry name" value="PX"/>
    <property type="match status" value="1"/>
</dbReference>
<dbReference type="SUPFAM" id="SSF64268">
    <property type="entry name" value="PX domain"/>
    <property type="match status" value="1"/>
</dbReference>
<dbReference type="PROSITE" id="PS50195">
    <property type="entry name" value="PX"/>
    <property type="match status" value="1"/>
</dbReference>
<gene>
    <name type="primary">SNX41</name>
    <name type="ordered locus">ADR192C</name>
</gene>
<reference key="1">
    <citation type="journal article" date="2004" name="Science">
        <title>The Ashbya gossypii genome as a tool for mapping the ancient Saccharomyces cerevisiae genome.</title>
        <authorList>
            <person name="Dietrich F.S."/>
            <person name="Voegeli S."/>
            <person name="Brachat S."/>
            <person name="Lerch A."/>
            <person name="Gates K."/>
            <person name="Steiner S."/>
            <person name="Mohr C."/>
            <person name="Poehlmann R."/>
            <person name="Luedi P."/>
            <person name="Choi S."/>
            <person name="Wing R.A."/>
            <person name="Flavier A."/>
            <person name="Gaffney T.D."/>
            <person name="Philippsen P."/>
        </authorList>
    </citation>
    <scope>NUCLEOTIDE SEQUENCE [LARGE SCALE GENOMIC DNA]</scope>
    <source>
        <strain>ATCC 10895 / CBS 109.51 / FGSC 9923 / NRRL Y-1056</strain>
    </source>
</reference>
<reference key="2">
    <citation type="journal article" date="2013" name="G3 (Bethesda)">
        <title>Genomes of Ashbya fungi isolated from insects reveal four mating-type loci, numerous translocations, lack of transposons, and distinct gene duplications.</title>
        <authorList>
            <person name="Dietrich F.S."/>
            <person name="Voegeli S."/>
            <person name="Kuo S."/>
            <person name="Philippsen P."/>
        </authorList>
    </citation>
    <scope>GENOME REANNOTATION</scope>
    <source>
        <strain>ATCC 10895 / CBS 109.51 / FGSC 9923 / NRRL Y-1056</strain>
    </source>
</reference>
<organism>
    <name type="scientific">Eremothecium gossypii (strain ATCC 10895 / CBS 109.51 / FGSC 9923 / NRRL Y-1056)</name>
    <name type="common">Yeast</name>
    <name type="synonym">Ashbya gossypii</name>
    <dbReference type="NCBI Taxonomy" id="284811"/>
    <lineage>
        <taxon>Eukaryota</taxon>
        <taxon>Fungi</taxon>
        <taxon>Dikarya</taxon>
        <taxon>Ascomycota</taxon>
        <taxon>Saccharomycotina</taxon>
        <taxon>Saccharomycetes</taxon>
        <taxon>Saccharomycetales</taxon>
        <taxon>Saccharomycetaceae</taxon>
        <taxon>Eremothecium</taxon>
    </lineage>
</organism>
<sequence length="603" mass="68638">MNSFRESDEEDNNPFSGTNHLYASGIGAVPEGDDDFLSAEVDTADETVQETREQMMSRLFGECEGPRESSAGGWTSGSMGSIGAPDGHSDEVTEFGIDTVLVEGEVRTPGRARVPASYPDAEGSLGALRIVDAGQYKDTFGNYAIGYTIAYEGRQVTRRYSEFDSLRQALARLLPTVIIPPIPSKHPLIRYFLNPLNAENDIRIIEKRRRLLSRFLNNCHDITDIREHTVFQKFLNPEYIWSEVLLTPPVSILPTNNLLAPPLNPTKPSPLHLLLPTPPRRTTSYGSPKTNNPEYDIRFTELESLLLRYHKCLQPVLASSRQKKIHFKQLASSLADLGAYYNAFSLEDNVINLPHQMDQIRDLSRAIEKIGQAVDVNYVSSELLVENIMILLEEPIGEMLQFVQEGREVLRFRMQKQQQFHIIDTTIKKRRGRIEELRNFQAQLARLEAALKQNAEESPTIARAVQRLDAQHLHKQRKSPSGELQWTGLFKSRSGSVRTHDSLTTRPVTGDVDVDLLSDEERAREIARLEGDLEKLNECYKLIQRDMLQVNESMARSFDWFIMYLHDTWALVLRNYTRTLLNWLKDCLTAWKNARVTIDTIAV</sequence>
<feature type="chain" id="PRO_0000213825" description="Sorting nexin-41">
    <location>
        <begin position="1"/>
        <end position="603"/>
    </location>
</feature>
<feature type="domain" description="PX" evidence="2">
    <location>
        <begin position="121"/>
        <end position="241"/>
    </location>
</feature>
<feature type="region of interest" description="Disordered" evidence="3">
    <location>
        <begin position="1"/>
        <end position="36"/>
    </location>
</feature>
<feature type="binding site" evidence="1">
    <location>
        <position position="159"/>
    </location>
    <ligand>
        <name>a 1,2-diacyl-sn-glycero-3-phospho-(1D-myo-inositol-3-phosphate)</name>
        <dbReference type="ChEBI" id="CHEBI:58088"/>
    </ligand>
</feature>
<feature type="binding site" evidence="1">
    <location>
        <position position="161"/>
    </location>
    <ligand>
        <name>a 1,2-diacyl-sn-glycero-3-phospho-(1D-myo-inositol-3-phosphate)</name>
        <dbReference type="ChEBI" id="CHEBI:58088"/>
    </ligand>
</feature>
<feature type="binding site" evidence="1">
    <location>
        <position position="185"/>
    </location>
    <ligand>
        <name>a 1,2-diacyl-sn-glycero-3-phospho-(1D-myo-inositol-3-phosphate)</name>
        <dbReference type="ChEBI" id="CHEBI:58088"/>
    </ligand>
</feature>
<feature type="binding site" evidence="1">
    <location>
        <position position="208"/>
    </location>
    <ligand>
        <name>a 1,2-diacyl-sn-glycero-3-phospho-(1D-myo-inositol-3-phosphate)</name>
        <dbReference type="ChEBI" id="CHEBI:58088"/>
    </ligand>
</feature>
<name>SNX41_EREGS</name>